<protein>
    <recommendedName>
        <fullName evidence="1">Enolase</fullName>
        <ecNumber evidence="1">4.2.1.11</ecNumber>
    </recommendedName>
    <alternativeName>
        <fullName evidence="1">2-phospho-D-glycerate hydro-lyase</fullName>
    </alternativeName>
    <alternativeName>
        <fullName evidence="1">2-phosphoglycerate dehydratase</fullName>
    </alternativeName>
</protein>
<gene>
    <name evidence="1" type="primary">eno</name>
    <name type="ordered locus">SAOUHSC_00799</name>
</gene>
<feature type="chain" id="PRO_0000267111" description="Enolase">
    <location>
        <begin position="1"/>
        <end position="434"/>
    </location>
</feature>
<feature type="active site" description="Proton donor" evidence="1">
    <location>
        <position position="207"/>
    </location>
</feature>
<feature type="active site" description="Proton acceptor" evidence="1">
    <location>
        <position position="343"/>
    </location>
</feature>
<feature type="binding site" evidence="1">
    <location>
        <position position="165"/>
    </location>
    <ligand>
        <name>(2R)-2-phosphoglycerate</name>
        <dbReference type="ChEBI" id="CHEBI:58289"/>
    </ligand>
</feature>
<feature type="binding site" evidence="1">
    <location>
        <position position="244"/>
    </location>
    <ligand>
        <name>Mg(2+)</name>
        <dbReference type="ChEBI" id="CHEBI:18420"/>
    </ligand>
</feature>
<feature type="binding site" evidence="1">
    <location>
        <position position="291"/>
    </location>
    <ligand>
        <name>Mg(2+)</name>
        <dbReference type="ChEBI" id="CHEBI:18420"/>
    </ligand>
</feature>
<feature type="binding site" evidence="1">
    <location>
        <position position="318"/>
    </location>
    <ligand>
        <name>Mg(2+)</name>
        <dbReference type="ChEBI" id="CHEBI:18420"/>
    </ligand>
</feature>
<feature type="binding site" evidence="1">
    <location>
        <position position="343"/>
    </location>
    <ligand>
        <name>(2R)-2-phosphoglycerate</name>
        <dbReference type="ChEBI" id="CHEBI:58289"/>
    </ligand>
</feature>
<feature type="binding site" evidence="1">
    <location>
        <position position="372"/>
    </location>
    <ligand>
        <name>(2R)-2-phosphoglycerate</name>
        <dbReference type="ChEBI" id="CHEBI:58289"/>
    </ligand>
</feature>
<feature type="binding site" evidence="1">
    <location>
        <position position="373"/>
    </location>
    <ligand>
        <name>(2R)-2-phosphoglycerate</name>
        <dbReference type="ChEBI" id="CHEBI:58289"/>
    </ligand>
</feature>
<feature type="binding site" evidence="1">
    <location>
        <position position="394"/>
    </location>
    <ligand>
        <name>(2R)-2-phosphoglycerate</name>
        <dbReference type="ChEBI" id="CHEBI:58289"/>
    </ligand>
</feature>
<keyword id="KW-0963">Cytoplasm</keyword>
<keyword id="KW-0324">Glycolysis</keyword>
<keyword id="KW-0456">Lyase</keyword>
<keyword id="KW-0460">Magnesium</keyword>
<keyword id="KW-0479">Metal-binding</keyword>
<keyword id="KW-1185">Reference proteome</keyword>
<keyword id="KW-0964">Secreted</keyword>
<keyword id="KW-0843">Virulence</keyword>
<dbReference type="EC" id="4.2.1.11" evidence="1"/>
<dbReference type="EMBL" id="CP000253">
    <property type="protein sequence ID" value="ABD29927.1"/>
    <property type="molecule type" value="Genomic_DNA"/>
</dbReference>
<dbReference type="RefSeq" id="WP_001121760.1">
    <property type="nucleotide sequence ID" value="NZ_LS483365.1"/>
</dbReference>
<dbReference type="RefSeq" id="YP_499355.1">
    <property type="nucleotide sequence ID" value="NC_007795.1"/>
</dbReference>
<dbReference type="SMR" id="Q2G028"/>
<dbReference type="STRING" id="93061.SAOUHSC_00799"/>
<dbReference type="PaxDb" id="1280-SAXN108_0844"/>
<dbReference type="GeneID" id="3919362"/>
<dbReference type="KEGG" id="sao:SAOUHSC_00799"/>
<dbReference type="PATRIC" id="fig|93061.5.peg.723"/>
<dbReference type="eggNOG" id="COG0148">
    <property type="taxonomic scope" value="Bacteria"/>
</dbReference>
<dbReference type="HOGENOM" id="CLU_031223_2_1_9"/>
<dbReference type="OrthoDB" id="9804716at2"/>
<dbReference type="UniPathway" id="UPA00109">
    <property type="reaction ID" value="UER00187"/>
</dbReference>
<dbReference type="PRO" id="PR:Q2G028"/>
<dbReference type="Proteomes" id="UP000008816">
    <property type="component" value="Chromosome"/>
</dbReference>
<dbReference type="GO" id="GO:0009986">
    <property type="term" value="C:cell surface"/>
    <property type="evidence" value="ECO:0007669"/>
    <property type="project" value="UniProtKB-SubCell"/>
</dbReference>
<dbReference type="GO" id="GO:0005576">
    <property type="term" value="C:extracellular region"/>
    <property type="evidence" value="ECO:0007669"/>
    <property type="project" value="UniProtKB-SubCell"/>
</dbReference>
<dbReference type="GO" id="GO:0000015">
    <property type="term" value="C:phosphopyruvate hydratase complex"/>
    <property type="evidence" value="ECO:0000318"/>
    <property type="project" value="GO_Central"/>
</dbReference>
<dbReference type="GO" id="GO:0005518">
    <property type="term" value="F:collagen binding"/>
    <property type="evidence" value="ECO:0000314"/>
    <property type="project" value="CAFA"/>
</dbReference>
<dbReference type="GO" id="GO:0043236">
    <property type="term" value="F:laminin binding"/>
    <property type="evidence" value="ECO:0000314"/>
    <property type="project" value="CAFA"/>
</dbReference>
<dbReference type="GO" id="GO:0000287">
    <property type="term" value="F:magnesium ion binding"/>
    <property type="evidence" value="ECO:0007669"/>
    <property type="project" value="UniProtKB-UniRule"/>
</dbReference>
<dbReference type="GO" id="GO:0004634">
    <property type="term" value="F:phosphopyruvate hydratase activity"/>
    <property type="evidence" value="ECO:0000318"/>
    <property type="project" value="GO_Central"/>
</dbReference>
<dbReference type="GO" id="GO:0006096">
    <property type="term" value="P:glycolytic process"/>
    <property type="evidence" value="ECO:0000318"/>
    <property type="project" value="GO_Central"/>
</dbReference>
<dbReference type="CDD" id="cd03313">
    <property type="entry name" value="enolase"/>
    <property type="match status" value="1"/>
</dbReference>
<dbReference type="FunFam" id="3.20.20.120:FF:000001">
    <property type="entry name" value="Enolase"/>
    <property type="match status" value="1"/>
</dbReference>
<dbReference type="FunFam" id="3.30.390.10:FF:000001">
    <property type="entry name" value="Enolase"/>
    <property type="match status" value="1"/>
</dbReference>
<dbReference type="Gene3D" id="3.20.20.120">
    <property type="entry name" value="Enolase-like C-terminal domain"/>
    <property type="match status" value="1"/>
</dbReference>
<dbReference type="Gene3D" id="3.30.390.10">
    <property type="entry name" value="Enolase-like, N-terminal domain"/>
    <property type="match status" value="1"/>
</dbReference>
<dbReference type="HAMAP" id="MF_00318">
    <property type="entry name" value="Enolase"/>
    <property type="match status" value="1"/>
</dbReference>
<dbReference type="InterPro" id="IPR000941">
    <property type="entry name" value="Enolase"/>
</dbReference>
<dbReference type="InterPro" id="IPR036849">
    <property type="entry name" value="Enolase-like_C_sf"/>
</dbReference>
<dbReference type="InterPro" id="IPR029017">
    <property type="entry name" value="Enolase-like_N"/>
</dbReference>
<dbReference type="InterPro" id="IPR020810">
    <property type="entry name" value="Enolase_C"/>
</dbReference>
<dbReference type="InterPro" id="IPR020809">
    <property type="entry name" value="Enolase_CS"/>
</dbReference>
<dbReference type="InterPro" id="IPR020811">
    <property type="entry name" value="Enolase_N"/>
</dbReference>
<dbReference type="NCBIfam" id="TIGR01060">
    <property type="entry name" value="eno"/>
    <property type="match status" value="1"/>
</dbReference>
<dbReference type="PANTHER" id="PTHR11902">
    <property type="entry name" value="ENOLASE"/>
    <property type="match status" value="1"/>
</dbReference>
<dbReference type="PANTHER" id="PTHR11902:SF1">
    <property type="entry name" value="ENOLASE"/>
    <property type="match status" value="1"/>
</dbReference>
<dbReference type="Pfam" id="PF00113">
    <property type="entry name" value="Enolase_C"/>
    <property type="match status" value="1"/>
</dbReference>
<dbReference type="Pfam" id="PF03952">
    <property type="entry name" value="Enolase_N"/>
    <property type="match status" value="1"/>
</dbReference>
<dbReference type="PIRSF" id="PIRSF001400">
    <property type="entry name" value="Enolase"/>
    <property type="match status" value="1"/>
</dbReference>
<dbReference type="PRINTS" id="PR00148">
    <property type="entry name" value="ENOLASE"/>
</dbReference>
<dbReference type="SFLD" id="SFLDF00002">
    <property type="entry name" value="enolase"/>
    <property type="match status" value="1"/>
</dbReference>
<dbReference type="SFLD" id="SFLDG00178">
    <property type="entry name" value="enolase"/>
    <property type="match status" value="1"/>
</dbReference>
<dbReference type="SMART" id="SM01192">
    <property type="entry name" value="Enolase_C"/>
    <property type="match status" value="1"/>
</dbReference>
<dbReference type="SMART" id="SM01193">
    <property type="entry name" value="Enolase_N"/>
    <property type="match status" value="1"/>
</dbReference>
<dbReference type="SUPFAM" id="SSF51604">
    <property type="entry name" value="Enolase C-terminal domain-like"/>
    <property type="match status" value="1"/>
</dbReference>
<dbReference type="SUPFAM" id="SSF54826">
    <property type="entry name" value="Enolase N-terminal domain-like"/>
    <property type="match status" value="1"/>
</dbReference>
<dbReference type="PROSITE" id="PS00164">
    <property type="entry name" value="ENOLASE"/>
    <property type="match status" value="1"/>
</dbReference>
<comment type="function">
    <text evidence="1">Catalyzes the reversible conversion of 2-phosphoglycerate (2-PG) into phosphoenolpyruvate (PEP). It is essential for the degradation of carbohydrates via glycolysis.</text>
</comment>
<comment type="function">
    <text evidence="2">Probably part of the RNA degradosome.</text>
</comment>
<comment type="catalytic activity">
    <reaction evidence="1">
        <text>(2R)-2-phosphoglycerate = phosphoenolpyruvate + H2O</text>
        <dbReference type="Rhea" id="RHEA:10164"/>
        <dbReference type="ChEBI" id="CHEBI:15377"/>
        <dbReference type="ChEBI" id="CHEBI:58289"/>
        <dbReference type="ChEBI" id="CHEBI:58702"/>
        <dbReference type="EC" id="4.2.1.11"/>
    </reaction>
</comment>
<comment type="cofactor">
    <cofactor evidence="1">
        <name>Mg(2+)</name>
        <dbReference type="ChEBI" id="CHEBI:18420"/>
    </cofactor>
    <text evidence="1">Binds a second Mg(2+) ion via substrate during catalysis.</text>
</comment>
<comment type="pathway">
    <text evidence="1">Carbohydrate degradation; glycolysis; pyruvate from D-glyceraldehyde 3-phosphate: step 4/5.</text>
</comment>
<comment type="subunit">
    <text evidence="2 4">Homodimer (Probable). Component of a possible RNA degradosome complex composed of cshA, eno, pfkA, pnp, rnjA, rnjB, rnpA and rny. Interacts specifically with RNA helicase CshA, PNPase and RNase Y.</text>
</comment>
<comment type="subcellular location">
    <subcellularLocation>
        <location evidence="1">Cytoplasm</location>
    </subcellularLocation>
    <subcellularLocation>
        <location evidence="1">Secreted</location>
    </subcellularLocation>
    <subcellularLocation>
        <location evidence="1">Cell surface</location>
    </subcellularLocation>
    <text evidence="1">Fractions of enolase are present in both the cytoplasm and on the cell surface.</text>
</comment>
<comment type="disruption phenotype">
    <text evidence="3">Essential, it cannot be deleted, although it can be replaced by its E.coli counterpart.</text>
</comment>
<comment type="similarity">
    <text evidence="1">Belongs to the enolase family.</text>
</comment>
<name>ENO_STAA8</name>
<accession>Q2G028</accession>
<evidence type="ECO:0000255" key="1">
    <source>
        <dbReference type="HAMAP-Rule" id="MF_00318"/>
    </source>
</evidence>
<evidence type="ECO:0000269" key="2">
    <source>
    </source>
</evidence>
<evidence type="ECO:0000269" key="3">
    <source>
    </source>
</evidence>
<evidence type="ECO:0000305" key="4"/>
<reference key="1">
    <citation type="book" date="2006" name="Gram positive pathogens, 2nd edition">
        <title>The Staphylococcus aureus NCTC 8325 genome.</title>
        <editorList>
            <person name="Fischetti V."/>
            <person name="Novick R."/>
            <person name="Ferretti J."/>
            <person name="Portnoy D."/>
            <person name="Rood J."/>
        </editorList>
        <authorList>
            <person name="Gillaspy A.F."/>
            <person name="Worrell V."/>
            <person name="Orvis J."/>
            <person name="Roe B.A."/>
            <person name="Dyer D.W."/>
            <person name="Iandolo J.J."/>
        </authorList>
    </citation>
    <scope>NUCLEOTIDE SEQUENCE [LARGE SCALE GENOMIC DNA]</scope>
    <source>
        <strain>NCTC 8325 / PS 47</strain>
    </source>
</reference>
<reference key="2">
    <citation type="journal article" date="2011" name="J. Bacteriol.">
        <title>Characterization of components of the Staphylococcus aureus mRNA degradosome holoenzyme-like complex.</title>
        <authorList>
            <person name="Roux C.M."/>
            <person name="DeMuth J.P."/>
            <person name="Dunman P.M."/>
        </authorList>
    </citation>
    <scope>INTERACTION WITH CSHA; PNPA AND RNY</scope>
    <scope>SUBUNIT</scope>
    <source>
        <strain>UAMS-1</strain>
    </source>
</reference>
<reference key="3">
    <citation type="journal article" date="2012" name="Appl. Environ. Microbiol.">
        <title>New range of vectors with a stringent 5-fluoroorotic acid-based counterselection system for generating mutants by allelic replacement in Staphylococcus aureus.</title>
        <authorList>
            <person name="Redder P."/>
            <person name="Linder P."/>
        </authorList>
    </citation>
    <scope>DISRUPTION PHENOTYPE</scope>
    <source>
        <strain>SA564</strain>
    </source>
</reference>
<organism>
    <name type="scientific">Staphylococcus aureus (strain NCTC 8325 / PS 47)</name>
    <dbReference type="NCBI Taxonomy" id="93061"/>
    <lineage>
        <taxon>Bacteria</taxon>
        <taxon>Bacillati</taxon>
        <taxon>Bacillota</taxon>
        <taxon>Bacilli</taxon>
        <taxon>Bacillales</taxon>
        <taxon>Staphylococcaceae</taxon>
        <taxon>Staphylococcus</taxon>
    </lineage>
</organism>
<sequence length="434" mass="47117">MPIITDVYAREVLDSRGNPTVEVEVLTESGAFGRALVPSGASTGEHEAVELRDGDKSRYLGKGVTKAVENVNEIIAPEIIEGEFSVLDQVSIDKMMIALDGTPNKGKLGANAILGVSIAVARAAADLLGQPLYKYLGGFNGKQLPVPMMNIVNGGSHSDAPIAFQEFMILPVGATTFKESLRWGTEIFHNLKSILSKRGLETAVGDEGGFAPKFEGTEDAVETIIQAIEAAGYKPGEEVFLGFDCASSEFYENGVYDYSKFEGEHGAKRTAAEQVDYLEQLVDKYPIITIEDGMDENDWDGWKQLTERIGDRVQLVGDDLFVTNTEILAKGIENGIGNSILIKVNQIGTLTETFDAIEMAQKAGYTAVVSHRSGETEDTTIADIAVATNAGQIKTGSLSRTDRIAKYNQLLRIEDELFETAKYDGIKSFYNLDK</sequence>
<proteinExistence type="evidence at protein level"/>